<name>NDK_ORITB</name>
<evidence type="ECO:0000255" key="1">
    <source>
        <dbReference type="HAMAP-Rule" id="MF_00451"/>
    </source>
</evidence>
<organism>
    <name type="scientific">Orientia tsutsugamushi (strain Boryong)</name>
    <name type="common">Rickettsia tsutsugamushi</name>
    <dbReference type="NCBI Taxonomy" id="357244"/>
    <lineage>
        <taxon>Bacteria</taxon>
        <taxon>Pseudomonadati</taxon>
        <taxon>Pseudomonadota</taxon>
        <taxon>Alphaproteobacteria</taxon>
        <taxon>Rickettsiales</taxon>
        <taxon>Rickettsiaceae</taxon>
        <taxon>Rickettsieae</taxon>
        <taxon>Orientia</taxon>
    </lineage>
</organism>
<feature type="chain" id="PRO_1000026263" description="Nucleoside diphosphate kinase">
    <location>
        <begin position="1"/>
        <end position="141"/>
    </location>
</feature>
<feature type="active site" description="Pros-phosphohistidine intermediate" evidence="1">
    <location>
        <position position="117"/>
    </location>
</feature>
<feature type="binding site" evidence="1">
    <location>
        <position position="11"/>
    </location>
    <ligand>
        <name>ATP</name>
        <dbReference type="ChEBI" id="CHEBI:30616"/>
    </ligand>
</feature>
<feature type="binding site" evidence="1">
    <location>
        <position position="59"/>
    </location>
    <ligand>
        <name>ATP</name>
        <dbReference type="ChEBI" id="CHEBI:30616"/>
    </ligand>
</feature>
<feature type="binding site" evidence="1">
    <location>
        <position position="87"/>
    </location>
    <ligand>
        <name>ATP</name>
        <dbReference type="ChEBI" id="CHEBI:30616"/>
    </ligand>
</feature>
<feature type="binding site" evidence="1">
    <location>
        <position position="93"/>
    </location>
    <ligand>
        <name>ATP</name>
        <dbReference type="ChEBI" id="CHEBI:30616"/>
    </ligand>
</feature>
<feature type="binding site" evidence="1">
    <location>
        <position position="104"/>
    </location>
    <ligand>
        <name>ATP</name>
        <dbReference type="ChEBI" id="CHEBI:30616"/>
    </ligand>
</feature>
<feature type="binding site" evidence="1">
    <location>
        <position position="114"/>
    </location>
    <ligand>
        <name>ATP</name>
        <dbReference type="ChEBI" id="CHEBI:30616"/>
    </ligand>
</feature>
<sequence>MNMEYTLSILKPDVIKRNIIGKVNTYIENSGLKIIAQKTLLLTKVQAENFYIIHKDRAYYQSLVQNMTSGPVVVQVLYGLNAVKKYREIIGATNPCDAKKGTIRGDIAKSIDENTVHGSDSLENADIEIKFFFALIEYAYL</sequence>
<gene>
    <name evidence="1" type="primary">ndk</name>
    <name type="ordered locus">OTBS_1862</name>
</gene>
<keyword id="KW-0067">ATP-binding</keyword>
<keyword id="KW-0963">Cytoplasm</keyword>
<keyword id="KW-0418">Kinase</keyword>
<keyword id="KW-0460">Magnesium</keyword>
<keyword id="KW-0479">Metal-binding</keyword>
<keyword id="KW-0546">Nucleotide metabolism</keyword>
<keyword id="KW-0547">Nucleotide-binding</keyword>
<keyword id="KW-0597">Phosphoprotein</keyword>
<keyword id="KW-1185">Reference proteome</keyword>
<keyword id="KW-0808">Transferase</keyword>
<protein>
    <recommendedName>
        <fullName evidence="1">Nucleoside diphosphate kinase</fullName>
        <shortName evidence="1">NDK</shortName>
        <shortName evidence="1">NDP kinase</shortName>
        <ecNumber evidence="1">2.7.4.6</ecNumber>
    </recommendedName>
    <alternativeName>
        <fullName evidence="1">Nucleoside-2-P kinase</fullName>
    </alternativeName>
</protein>
<comment type="function">
    <text evidence="1">Major role in the synthesis of nucleoside triphosphates other than ATP. The ATP gamma phosphate is transferred to the NDP beta phosphate via a ping-pong mechanism, using a phosphorylated active-site intermediate.</text>
</comment>
<comment type="catalytic activity">
    <reaction evidence="1">
        <text>a 2'-deoxyribonucleoside 5'-diphosphate + ATP = a 2'-deoxyribonucleoside 5'-triphosphate + ADP</text>
        <dbReference type="Rhea" id="RHEA:44640"/>
        <dbReference type="ChEBI" id="CHEBI:30616"/>
        <dbReference type="ChEBI" id="CHEBI:61560"/>
        <dbReference type="ChEBI" id="CHEBI:73316"/>
        <dbReference type="ChEBI" id="CHEBI:456216"/>
        <dbReference type="EC" id="2.7.4.6"/>
    </reaction>
</comment>
<comment type="catalytic activity">
    <reaction evidence="1">
        <text>a ribonucleoside 5'-diphosphate + ATP = a ribonucleoside 5'-triphosphate + ADP</text>
        <dbReference type="Rhea" id="RHEA:18113"/>
        <dbReference type="ChEBI" id="CHEBI:30616"/>
        <dbReference type="ChEBI" id="CHEBI:57930"/>
        <dbReference type="ChEBI" id="CHEBI:61557"/>
        <dbReference type="ChEBI" id="CHEBI:456216"/>
        <dbReference type="EC" id="2.7.4.6"/>
    </reaction>
</comment>
<comment type="cofactor">
    <cofactor evidence="1">
        <name>Mg(2+)</name>
        <dbReference type="ChEBI" id="CHEBI:18420"/>
    </cofactor>
</comment>
<comment type="subunit">
    <text evidence="1">Homotetramer.</text>
</comment>
<comment type="subcellular location">
    <subcellularLocation>
        <location evidence="1">Cytoplasm</location>
    </subcellularLocation>
</comment>
<comment type="similarity">
    <text evidence="1">Belongs to the NDK family.</text>
</comment>
<reference key="1">
    <citation type="journal article" date="2007" name="Proc. Natl. Acad. Sci. U.S.A.">
        <title>The Orientia tsutsugamushi genome reveals massive proliferation of conjugative type IV secretion system and host-cell interaction genes.</title>
        <authorList>
            <person name="Cho N.-H."/>
            <person name="Kim H.-R."/>
            <person name="Lee J.-H."/>
            <person name="Kim S.-Y."/>
            <person name="Kim J."/>
            <person name="Cha S."/>
            <person name="Kim S.-Y."/>
            <person name="Darby A.C."/>
            <person name="Fuxelius H.-H."/>
            <person name="Yin J."/>
            <person name="Kim J.H."/>
            <person name="Kim J."/>
            <person name="Lee S.J."/>
            <person name="Koh Y.-S."/>
            <person name="Jang W.-J."/>
            <person name="Park K.-H."/>
            <person name="Andersson S.G.E."/>
            <person name="Choi M.-S."/>
            <person name="Kim I.-S."/>
        </authorList>
    </citation>
    <scope>NUCLEOTIDE SEQUENCE [LARGE SCALE GENOMIC DNA]</scope>
    <source>
        <strain>Boryong</strain>
    </source>
</reference>
<proteinExistence type="inferred from homology"/>
<accession>A5CF69</accession>
<dbReference type="EC" id="2.7.4.6" evidence="1"/>
<dbReference type="EMBL" id="AM494475">
    <property type="protein sequence ID" value="CAM80957.1"/>
    <property type="molecule type" value="Genomic_DNA"/>
</dbReference>
<dbReference type="RefSeq" id="WP_011945084.1">
    <property type="nucleotide sequence ID" value="NC_009488.1"/>
</dbReference>
<dbReference type="SMR" id="A5CF69"/>
<dbReference type="GeneID" id="89458547"/>
<dbReference type="KEGG" id="ots:OTBS_1862"/>
<dbReference type="eggNOG" id="COG0105">
    <property type="taxonomic scope" value="Bacteria"/>
</dbReference>
<dbReference type="HOGENOM" id="CLU_060216_8_1_5"/>
<dbReference type="Proteomes" id="UP000001565">
    <property type="component" value="Chromosome"/>
</dbReference>
<dbReference type="GO" id="GO:0005737">
    <property type="term" value="C:cytoplasm"/>
    <property type="evidence" value="ECO:0007669"/>
    <property type="project" value="UniProtKB-SubCell"/>
</dbReference>
<dbReference type="GO" id="GO:0005524">
    <property type="term" value="F:ATP binding"/>
    <property type="evidence" value="ECO:0007669"/>
    <property type="project" value="UniProtKB-UniRule"/>
</dbReference>
<dbReference type="GO" id="GO:0046872">
    <property type="term" value="F:metal ion binding"/>
    <property type="evidence" value="ECO:0007669"/>
    <property type="project" value="UniProtKB-KW"/>
</dbReference>
<dbReference type="GO" id="GO:0004550">
    <property type="term" value="F:nucleoside diphosphate kinase activity"/>
    <property type="evidence" value="ECO:0007669"/>
    <property type="project" value="UniProtKB-UniRule"/>
</dbReference>
<dbReference type="GO" id="GO:0006241">
    <property type="term" value="P:CTP biosynthetic process"/>
    <property type="evidence" value="ECO:0007669"/>
    <property type="project" value="UniProtKB-UniRule"/>
</dbReference>
<dbReference type="GO" id="GO:0006183">
    <property type="term" value="P:GTP biosynthetic process"/>
    <property type="evidence" value="ECO:0007669"/>
    <property type="project" value="UniProtKB-UniRule"/>
</dbReference>
<dbReference type="GO" id="GO:0006228">
    <property type="term" value="P:UTP biosynthetic process"/>
    <property type="evidence" value="ECO:0007669"/>
    <property type="project" value="UniProtKB-UniRule"/>
</dbReference>
<dbReference type="CDD" id="cd04413">
    <property type="entry name" value="NDPk_I"/>
    <property type="match status" value="1"/>
</dbReference>
<dbReference type="FunFam" id="3.30.70.141:FF:000039">
    <property type="entry name" value="Nucleoside diphosphate kinase B"/>
    <property type="match status" value="1"/>
</dbReference>
<dbReference type="Gene3D" id="3.30.70.141">
    <property type="entry name" value="Nucleoside diphosphate kinase-like domain"/>
    <property type="match status" value="1"/>
</dbReference>
<dbReference type="HAMAP" id="MF_00451">
    <property type="entry name" value="NDP_kinase"/>
    <property type="match status" value="1"/>
</dbReference>
<dbReference type="InterPro" id="IPR034907">
    <property type="entry name" value="NDK-like_dom"/>
</dbReference>
<dbReference type="InterPro" id="IPR036850">
    <property type="entry name" value="NDK-like_dom_sf"/>
</dbReference>
<dbReference type="InterPro" id="IPR001564">
    <property type="entry name" value="Nucleoside_diP_kinase"/>
</dbReference>
<dbReference type="InterPro" id="IPR023005">
    <property type="entry name" value="Nucleoside_diP_kinase_AS"/>
</dbReference>
<dbReference type="NCBIfam" id="NF001908">
    <property type="entry name" value="PRK00668.1"/>
    <property type="match status" value="1"/>
</dbReference>
<dbReference type="PANTHER" id="PTHR46161">
    <property type="entry name" value="NUCLEOSIDE DIPHOSPHATE KINASE"/>
    <property type="match status" value="1"/>
</dbReference>
<dbReference type="PANTHER" id="PTHR46161:SF3">
    <property type="entry name" value="NUCLEOSIDE DIPHOSPHATE KINASE DDB_G0292928-RELATED"/>
    <property type="match status" value="1"/>
</dbReference>
<dbReference type="Pfam" id="PF00334">
    <property type="entry name" value="NDK"/>
    <property type="match status" value="1"/>
</dbReference>
<dbReference type="PRINTS" id="PR01243">
    <property type="entry name" value="NUCDPKINASE"/>
</dbReference>
<dbReference type="SMART" id="SM00562">
    <property type="entry name" value="NDK"/>
    <property type="match status" value="1"/>
</dbReference>
<dbReference type="SUPFAM" id="SSF54919">
    <property type="entry name" value="Nucleoside diphosphate kinase, NDK"/>
    <property type="match status" value="1"/>
</dbReference>
<dbReference type="PROSITE" id="PS00469">
    <property type="entry name" value="NDPK"/>
    <property type="match status" value="1"/>
</dbReference>
<dbReference type="PROSITE" id="PS51374">
    <property type="entry name" value="NDPK_LIKE"/>
    <property type="match status" value="1"/>
</dbReference>